<comment type="function">
    <text evidence="1">This protein is one of the two subunits of integration host factor, a specific DNA-binding protein that functions in genetic recombination as well as in transcriptional and translational control.</text>
</comment>
<comment type="subunit">
    <text evidence="1">Heterodimer of an alpha and a beta chain.</text>
</comment>
<comment type="similarity">
    <text evidence="1">Belongs to the bacterial histone-like protein family.</text>
</comment>
<keyword id="KW-0233">DNA recombination</keyword>
<keyword id="KW-0238">DNA-binding</keyword>
<keyword id="KW-1185">Reference proteome</keyword>
<keyword id="KW-0804">Transcription</keyword>
<keyword id="KW-0805">Transcription regulation</keyword>
<keyword id="KW-0810">Translation regulation</keyword>
<proteinExistence type="inferred from homology"/>
<reference key="1">
    <citation type="journal article" date="2004" name="Proc. Natl. Acad. Sci. U.S.A.">
        <title>Genomic plasticity of the causative agent of melioidosis, Burkholderia pseudomallei.</title>
        <authorList>
            <person name="Holden M.T.G."/>
            <person name="Titball R.W."/>
            <person name="Peacock S.J."/>
            <person name="Cerdeno-Tarraga A.-M."/>
            <person name="Atkins T."/>
            <person name="Crossman L.C."/>
            <person name="Pitt T."/>
            <person name="Churcher C."/>
            <person name="Mungall K.L."/>
            <person name="Bentley S.D."/>
            <person name="Sebaihia M."/>
            <person name="Thomson N.R."/>
            <person name="Bason N."/>
            <person name="Beacham I.R."/>
            <person name="Brooks K."/>
            <person name="Brown K.A."/>
            <person name="Brown N.F."/>
            <person name="Challis G.L."/>
            <person name="Cherevach I."/>
            <person name="Chillingworth T."/>
            <person name="Cronin A."/>
            <person name="Crossett B."/>
            <person name="Davis P."/>
            <person name="DeShazer D."/>
            <person name="Feltwell T."/>
            <person name="Fraser A."/>
            <person name="Hance Z."/>
            <person name="Hauser H."/>
            <person name="Holroyd S."/>
            <person name="Jagels K."/>
            <person name="Keith K.E."/>
            <person name="Maddison M."/>
            <person name="Moule S."/>
            <person name="Price C."/>
            <person name="Quail M.A."/>
            <person name="Rabbinowitsch E."/>
            <person name="Rutherford K."/>
            <person name="Sanders M."/>
            <person name="Simmonds M."/>
            <person name="Songsivilai S."/>
            <person name="Stevens K."/>
            <person name="Tumapa S."/>
            <person name="Vesaratchavest M."/>
            <person name="Whitehead S."/>
            <person name="Yeats C."/>
            <person name="Barrell B.G."/>
            <person name="Oyston P.C.F."/>
            <person name="Parkhill J."/>
        </authorList>
    </citation>
    <scope>NUCLEOTIDE SEQUENCE [LARGE SCALE GENOMIC DNA]</scope>
    <source>
        <strain>K96243</strain>
    </source>
</reference>
<feature type="chain" id="PRO_0000277721" description="Integration host factor subunit alpha">
    <location>
        <begin position="1"/>
        <end position="115"/>
    </location>
</feature>
<organism>
    <name type="scientific">Burkholderia pseudomallei (strain K96243)</name>
    <dbReference type="NCBI Taxonomy" id="272560"/>
    <lineage>
        <taxon>Bacteria</taxon>
        <taxon>Pseudomonadati</taxon>
        <taxon>Pseudomonadota</taxon>
        <taxon>Betaproteobacteria</taxon>
        <taxon>Burkholderiales</taxon>
        <taxon>Burkholderiaceae</taxon>
        <taxon>Burkholderia</taxon>
        <taxon>pseudomallei group</taxon>
    </lineage>
</organism>
<dbReference type="EMBL" id="BX571965">
    <property type="protein sequence ID" value="CAH35938.1"/>
    <property type="molecule type" value="Genomic_DNA"/>
</dbReference>
<dbReference type="RefSeq" id="YP_108538.1">
    <property type="nucleotide sequence ID" value="NC_006350.1"/>
</dbReference>
<dbReference type="SMR" id="Q63TM8"/>
<dbReference type="STRING" id="272560.BPSL1939"/>
<dbReference type="KEGG" id="bps:BPSL1939"/>
<dbReference type="PATRIC" id="fig|272560.6.peg.2185"/>
<dbReference type="eggNOG" id="COG0776">
    <property type="taxonomic scope" value="Bacteria"/>
</dbReference>
<dbReference type="Proteomes" id="UP000000605">
    <property type="component" value="Chromosome 1"/>
</dbReference>
<dbReference type="GO" id="GO:0005829">
    <property type="term" value="C:cytosol"/>
    <property type="evidence" value="ECO:0007669"/>
    <property type="project" value="TreeGrafter"/>
</dbReference>
<dbReference type="GO" id="GO:0003677">
    <property type="term" value="F:DNA binding"/>
    <property type="evidence" value="ECO:0007669"/>
    <property type="project" value="UniProtKB-UniRule"/>
</dbReference>
<dbReference type="GO" id="GO:0030527">
    <property type="term" value="F:structural constituent of chromatin"/>
    <property type="evidence" value="ECO:0007669"/>
    <property type="project" value="InterPro"/>
</dbReference>
<dbReference type="GO" id="GO:0006310">
    <property type="term" value="P:DNA recombination"/>
    <property type="evidence" value="ECO:0007669"/>
    <property type="project" value="UniProtKB-UniRule"/>
</dbReference>
<dbReference type="GO" id="GO:0009893">
    <property type="term" value="P:positive regulation of metabolic process"/>
    <property type="evidence" value="ECO:0007669"/>
    <property type="project" value="UniProtKB-ARBA"/>
</dbReference>
<dbReference type="GO" id="GO:0006355">
    <property type="term" value="P:regulation of DNA-templated transcription"/>
    <property type="evidence" value="ECO:0007669"/>
    <property type="project" value="UniProtKB-UniRule"/>
</dbReference>
<dbReference type="GO" id="GO:0006417">
    <property type="term" value="P:regulation of translation"/>
    <property type="evidence" value="ECO:0007669"/>
    <property type="project" value="UniProtKB-UniRule"/>
</dbReference>
<dbReference type="CDD" id="cd13835">
    <property type="entry name" value="IHF_A"/>
    <property type="match status" value="1"/>
</dbReference>
<dbReference type="FunFam" id="4.10.520.10:FF:000002">
    <property type="entry name" value="Integration host factor subunit alpha"/>
    <property type="match status" value="1"/>
</dbReference>
<dbReference type="Gene3D" id="4.10.520.10">
    <property type="entry name" value="IHF-like DNA-binding proteins"/>
    <property type="match status" value="1"/>
</dbReference>
<dbReference type="HAMAP" id="MF_00380">
    <property type="entry name" value="IHF_alpha"/>
    <property type="match status" value="1"/>
</dbReference>
<dbReference type="InterPro" id="IPR000119">
    <property type="entry name" value="Hist_DNA-bd"/>
</dbReference>
<dbReference type="InterPro" id="IPR020816">
    <property type="entry name" value="Histone-like_DNA-bd_CS"/>
</dbReference>
<dbReference type="InterPro" id="IPR010992">
    <property type="entry name" value="IHF-like_DNA-bd_dom_sf"/>
</dbReference>
<dbReference type="InterPro" id="IPR005684">
    <property type="entry name" value="IHF_alpha"/>
</dbReference>
<dbReference type="NCBIfam" id="TIGR00987">
    <property type="entry name" value="himA"/>
    <property type="match status" value="1"/>
</dbReference>
<dbReference type="NCBIfam" id="NF001401">
    <property type="entry name" value="PRK00285.1"/>
    <property type="match status" value="1"/>
</dbReference>
<dbReference type="PANTHER" id="PTHR33175">
    <property type="entry name" value="DNA-BINDING PROTEIN HU"/>
    <property type="match status" value="1"/>
</dbReference>
<dbReference type="PANTHER" id="PTHR33175:SF2">
    <property type="entry name" value="INTEGRATION HOST FACTOR SUBUNIT ALPHA"/>
    <property type="match status" value="1"/>
</dbReference>
<dbReference type="Pfam" id="PF00216">
    <property type="entry name" value="Bac_DNA_binding"/>
    <property type="match status" value="1"/>
</dbReference>
<dbReference type="PRINTS" id="PR01727">
    <property type="entry name" value="DNABINDINGHU"/>
</dbReference>
<dbReference type="SMART" id="SM00411">
    <property type="entry name" value="BHL"/>
    <property type="match status" value="1"/>
</dbReference>
<dbReference type="SUPFAM" id="SSF47729">
    <property type="entry name" value="IHF-like DNA-binding proteins"/>
    <property type="match status" value="1"/>
</dbReference>
<dbReference type="PROSITE" id="PS00045">
    <property type="entry name" value="HISTONE_LIKE"/>
    <property type="match status" value="1"/>
</dbReference>
<evidence type="ECO:0000255" key="1">
    <source>
        <dbReference type="HAMAP-Rule" id="MF_00380"/>
    </source>
</evidence>
<name>IHFA_BURPS</name>
<protein>
    <recommendedName>
        <fullName evidence="1">Integration host factor subunit alpha</fullName>
        <shortName evidence="1">IHF-alpha</shortName>
    </recommendedName>
</protein>
<sequence>MARDVPASTPAGDTPTLTKAELAELLFDSVGLNKREAKDMVEAFFEVIRDALENGESVKLSGFGNFQLRDKPQRPGRNPKTGEAIPIAARRVVTFHASQKLKALVENGAEPDLAR</sequence>
<accession>Q63TM8</accession>
<gene>
    <name evidence="1" type="primary">ihfA</name>
    <name evidence="1" type="synonym">himA</name>
    <name type="ordered locus">BPSL1939</name>
</gene>